<sequence>MGPSAPLLLFFLLSWPGSLQGQQHHLVEYMERRLAALEERLAQCQDQSSRHAAELRDFKNKMLPLLEVAEKERETLRTEADSISGRVDRLEREVDYLETQNPALPCVELDEKVTGGPGTKGKGRRNEKYDMVTDCSYTISQVRSMKILKRFGGSAGLWTKDPLGPAEKIYVLDGTQNDTAFVFPRLRDFTLTMAARKASRIRVPFPWVGTGQLVYGGFLYYARRPPGGAGGGGELENTLQLIKFHLANRTVVDSSVFPAERLIPPYGLTVDTYIDLAADEEGLWAVYATREDDRHLCLAKLDPQTLDTEQQWDTPCPRENAEAAFVICGTLYVVYNTRPASRARIQCSFDASGTLTPERAALSYFPRRYGAHASLRYNPRERQLYAWDDGYQIVYKLEMKKKEEEV</sequence>
<keyword id="KW-0175">Coiled coil</keyword>
<keyword id="KW-0217">Developmental protein</keyword>
<keyword id="KW-1015">Disulfide bond</keyword>
<keyword id="KW-0325">Glycoprotein</keyword>
<keyword id="KW-1185">Reference proteome</keyword>
<keyword id="KW-0964">Secreted</keyword>
<keyword id="KW-0732">Signal</keyword>
<organism>
    <name type="scientific">Rattus norvegicus</name>
    <name type="common">Rat</name>
    <dbReference type="NCBI Taxonomy" id="10116"/>
    <lineage>
        <taxon>Eukaryota</taxon>
        <taxon>Metazoa</taxon>
        <taxon>Chordata</taxon>
        <taxon>Craniata</taxon>
        <taxon>Vertebrata</taxon>
        <taxon>Euteleostomi</taxon>
        <taxon>Mammalia</taxon>
        <taxon>Eutheria</taxon>
        <taxon>Euarchontoglires</taxon>
        <taxon>Glires</taxon>
        <taxon>Rodentia</taxon>
        <taxon>Myomorpha</taxon>
        <taxon>Muroidea</taxon>
        <taxon>Muridae</taxon>
        <taxon>Murinae</taxon>
        <taxon>Rattus</taxon>
    </lineage>
</organism>
<protein>
    <recommendedName>
        <fullName>Olfactomedin-like protein 3</fullName>
    </recommendedName>
</protein>
<name>OLFL3_RAT</name>
<gene>
    <name type="primary">Olfml3</name>
</gene>
<evidence type="ECO:0000250" key="1"/>
<evidence type="ECO:0000255" key="2"/>
<evidence type="ECO:0000255" key="3">
    <source>
        <dbReference type="PROSITE-ProRule" id="PRU00446"/>
    </source>
</evidence>
<evidence type="ECO:0000305" key="4"/>
<proteinExistence type="evidence at transcript level"/>
<reference key="1">
    <citation type="journal article" date="2004" name="Genome Res.">
        <title>The status, quality, and expansion of the NIH full-length cDNA project: the Mammalian Gene Collection (MGC).</title>
        <authorList>
            <consortium name="The MGC Project Team"/>
        </authorList>
    </citation>
    <scope>NUCLEOTIDE SEQUENCE [LARGE SCALE MRNA]</scope>
    <source>
        <tissue>Thymus</tissue>
    </source>
</reference>
<dbReference type="EMBL" id="BC158838">
    <property type="protein sequence ID" value="AAI58839.1"/>
    <property type="status" value="ALT_INIT"/>
    <property type="molecule type" value="mRNA"/>
</dbReference>
<dbReference type="SMR" id="B0BNI5"/>
<dbReference type="FunCoup" id="B0BNI5">
    <property type="interactions" value="108"/>
</dbReference>
<dbReference type="STRING" id="10116.ENSRNOP00000026075"/>
<dbReference type="GlyCosmos" id="B0BNI5">
    <property type="glycosylation" value="1 site, No reported glycans"/>
</dbReference>
<dbReference type="GlyGen" id="B0BNI5">
    <property type="glycosylation" value="1 site"/>
</dbReference>
<dbReference type="PhosphoSitePlus" id="B0BNI5"/>
<dbReference type="PaxDb" id="10116-ENSRNOP00000026075"/>
<dbReference type="PeptideAtlas" id="B0BNI5"/>
<dbReference type="UCSC" id="RGD:1311106">
    <property type="organism name" value="rat"/>
</dbReference>
<dbReference type="AGR" id="RGD:1311106"/>
<dbReference type="RGD" id="1311106">
    <property type="gene designation" value="Olfml3"/>
</dbReference>
<dbReference type="eggNOG" id="KOG3545">
    <property type="taxonomic scope" value="Eukaryota"/>
</dbReference>
<dbReference type="InParanoid" id="B0BNI5"/>
<dbReference type="PhylomeDB" id="B0BNI5"/>
<dbReference type="PRO" id="PR:B0BNI5"/>
<dbReference type="Proteomes" id="UP000002494">
    <property type="component" value="Unplaced"/>
</dbReference>
<dbReference type="GO" id="GO:0005615">
    <property type="term" value="C:extracellular space"/>
    <property type="evidence" value="ECO:0000318"/>
    <property type="project" value="GO_Central"/>
</dbReference>
<dbReference type="GO" id="GO:0007165">
    <property type="term" value="P:signal transduction"/>
    <property type="evidence" value="ECO:0000318"/>
    <property type="project" value="GO_Central"/>
</dbReference>
<dbReference type="InterPro" id="IPR003112">
    <property type="entry name" value="Olfac-like_dom"/>
</dbReference>
<dbReference type="InterPro" id="IPR050605">
    <property type="entry name" value="Olfactomedin-like_domain"/>
</dbReference>
<dbReference type="PANTHER" id="PTHR23192:SF8">
    <property type="entry name" value="OLFACTOMEDIN-LIKE PROTEIN 3"/>
    <property type="match status" value="1"/>
</dbReference>
<dbReference type="PANTHER" id="PTHR23192">
    <property type="entry name" value="OLFACTOMEDIN-RELATED"/>
    <property type="match status" value="1"/>
</dbReference>
<dbReference type="Pfam" id="PF02191">
    <property type="entry name" value="OLF"/>
    <property type="match status" value="1"/>
</dbReference>
<dbReference type="SMART" id="SM00284">
    <property type="entry name" value="OLF"/>
    <property type="match status" value="1"/>
</dbReference>
<dbReference type="PROSITE" id="PS51132">
    <property type="entry name" value="OLF"/>
    <property type="match status" value="1"/>
</dbReference>
<feature type="signal peptide" evidence="2">
    <location>
        <begin position="1"/>
        <end position="21"/>
    </location>
</feature>
<feature type="chain" id="PRO_0000361561" description="Olfactomedin-like protein 3">
    <location>
        <begin position="22"/>
        <end position="406"/>
    </location>
</feature>
<feature type="domain" description="Olfactomedin-like" evidence="3">
    <location>
        <begin position="134"/>
        <end position="401"/>
    </location>
</feature>
<feature type="coiled-coil region" evidence="2">
    <location>
        <begin position="22"/>
        <end position="101"/>
    </location>
</feature>
<feature type="glycosylation site" description="N-linked (GlcNAc...) asparagine" evidence="2">
    <location>
        <position position="248"/>
    </location>
</feature>
<feature type="disulfide bond" evidence="3">
    <location>
        <begin position="135"/>
        <end position="328"/>
    </location>
</feature>
<comment type="function">
    <text evidence="1">Secreted scaffold protein that plays an essential role in dorsoventral patterning during early development. Stabilizes axial formation by restricting chordin (CHRD) activity on the dorsal side. Acts by facilitating the association between the tolloid proteases and their substrate chordin (CHRD), leading to enhance chordin (CHRD) degradation (By similarity). May have matrix-related function involved in placental and embryonic development, or play a similar role in other physiological processes (By similarity).</text>
</comment>
<comment type="subcellular location">
    <subcellularLocation>
        <location evidence="1">Secreted</location>
    </subcellularLocation>
</comment>
<comment type="similarity">
    <text evidence="4">Belongs to the OLFML3 family.</text>
</comment>
<comment type="sequence caution" evidence="4">
    <conflict type="erroneous initiation">
        <sequence resource="EMBL-CDS" id="AAI58839"/>
    </conflict>
</comment>
<accession>B0BNI5</accession>